<keyword id="KW-0489">Methyltransferase</keyword>
<keyword id="KW-1185">Reference proteome</keyword>
<keyword id="KW-0949">S-adenosyl-L-methionine</keyword>
<keyword id="KW-0808">Transferase</keyword>
<gene>
    <name evidence="4" type="primary">VdtC</name>
    <name type="ORF">C8Q69DRAFT_488617</name>
</gene>
<proteinExistence type="evidence at protein level"/>
<reference key="1">
    <citation type="journal article" date="2018" name="Front. Microbiol.">
        <title>Genomic and genetic insights into a cosmopolitan fungus, Paecilomyces variotii (Eurotiales).</title>
        <authorList>
            <person name="Urquhart A.S."/>
            <person name="Mondo S.J."/>
            <person name="Maekelae M.R."/>
            <person name="Hane J.K."/>
            <person name="Wiebenga A."/>
            <person name="He G."/>
            <person name="Mihaltcheva S."/>
            <person name="Pangilinan J."/>
            <person name="Lipzen A."/>
            <person name="Barry K."/>
            <person name="de Vries R.P."/>
            <person name="Grigoriev I.V."/>
            <person name="Idnurm A."/>
        </authorList>
    </citation>
    <scope>NUCLEOTIDE SEQUENCE [LARGE SCALE GENOMIC DNA]</scope>
    <source>
        <strain>ATCC 90900 / JCM 12815 / CBS 101075</strain>
    </source>
</reference>
<reference key="2">
    <citation type="journal article" date="2019" name="Fungal Biol. Biotechnol.">
        <title>The fungal gene cluster for biosynthesis of the antibacterial agent viriditoxin.</title>
        <authorList>
            <person name="Urquhart A.S."/>
            <person name="Hu J."/>
            <person name="Chooi Y.H."/>
            <person name="Idnurm A."/>
        </authorList>
    </citation>
    <scope>IDENTIFICATION</scope>
    <scope>FUNCTION</scope>
    <scope>DISRUPTION PHENOTYPE</scope>
    <scope>PATHWAY</scope>
</reference>
<reference key="3">
    <citation type="journal article" date="2019" name="J. Am. Chem. Soc.">
        <title>Fungal dirigent protein controls the stereoselectivity of multicopper oxidase-catalyzed phenol coupling in viriditoxin biosynthesis.</title>
        <authorList>
            <person name="Hu J."/>
            <person name="Li H."/>
            <person name="Chooi Y.H."/>
        </authorList>
    </citation>
    <scope>FUNCTION</scope>
    <scope>CATALYTIC ACTIVITY</scope>
    <scope>PATHWAY</scope>
</reference>
<comment type="function">
    <text evidence="2 3">O-methyltransferase; part of the gene cluster that mediates the biosynthesis of viriditoxin, one of the 'classical' secondary metabolites produced by fungi and that has antibacterial activity (PubMed:31045362, PubMed:31304040). The first step is performed by the polyketide synthase VdtA which condenses one acetyl-CoA and 6 malonyl-CoA units to form the heptaketide monomer backbone of viriditoxin (PubMed:31304040). The product of VdtA is then O-methylated on C7 by the O-methyltransferase VdtC (PubMed:31045362, PubMed:31304040). The O-methyl group is important for the stereoselective coupling of the monomers at the final step of viriditoxin biosynthesis (PubMed:31045362, PubMed:31304040). The short-chain dehydrogenase/reductase VdtF then acts as a stereospecific reductase converting the pyrone to dihydropyrone via the reduction of the C3-C4 double bond (PubMed:31045362, PubMed:31304040). The FAD-binding monooxygenase VdtE then converts the ketone group into a methyl-ester group to yield semi-viriditoxin (PubMed:31045362, PubMed:31304040). Finally, the laccase VdtB is involved in dimerization of 2 semi-viriditoxin molecules to yield the final viriditoxin (PubMed:31045362, PubMed:31304040). VdtB is responsible for the regioselective 6,6'-coupling of semi-viriditoxin, which yields (M)-viriditoxin and (P)-viriditoxin at a ratio of 1:2 (PubMed:31045362, PubMed:31304040). The non-catalytic carboxylesterase-like protein VdtD affects the stereochemistical outcome of the coupling (PubMed:31045362, PubMed:31304040). The highly reducing polyketide synthase VdtX is not involved in viriditoxin synthesis, but might possibly play a role in the production of additional metabolites not identified yet (PubMed:31045362, PubMed:31304040).</text>
</comment>
<comment type="catalytic activity">
    <reaction evidence="2">
        <text>7,9,10-trihydroxy-3-(2-oxopropyl)-1H-benzo[g]isochromen-1-one + S-adenosyl-L-methionine = 9,10-dihydroxy-7-methoxy-3-(2-oxopropyl)-1H-benzo[g]isochromen-1-one + S-adenosyl-L-homocysteine + H(+)</text>
        <dbReference type="Rhea" id="RHEA:62864"/>
        <dbReference type="ChEBI" id="CHEBI:15378"/>
        <dbReference type="ChEBI" id="CHEBI:57856"/>
        <dbReference type="ChEBI" id="CHEBI:59789"/>
        <dbReference type="ChEBI" id="CHEBI:146009"/>
        <dbReference type="ChEBI" id="CHEBI:146010"/>
    </reaction>
    <physiologicalReaction direction="left-to-right" evidence="2">
        <dbReference type="Rhea" id="RHEA:62865"/>
    </physiologicalReaction>
</comment>
<comment type="pathway">
    <text evidence="2 3">Secondary metabolite biosynthesis.</text>
</comment>
<comment type="disruption phenotype">
    <text evidence="3">Impairs the O-methylation of C7 of the heptaketide monomer.</text>
</comment>
<comment type="similarity">
    <text evidence="5">Belongs to the class I-like SAM-binding methyltransferase superfamily. Cation-independent O-methyltransferase family. COMT subfamily.</text>
</comment>
<feature type="chain" id="PRO_0000448343" description="O-methyltransferase VdtC">
    <location>
        <begin position="1"/>
        <end position="433"/>
    </location>
</feature>
<feature type="active site" description="Proton acceptor" evidence="1">
    <location>
        <position position="335"/>
    </location>
</feature>
<feature type="binding site" evidence="1">
    <location>
        <position position="284"/>
    </location>
    <ligand>
        <name>S-adenosyl-L-methionine</name>
        <dbReference type="ChEBI" id="CHEBI:59789"/>
    </ligand>
</feature>
<evidence type="ECO:0000255" key="1">
    <source>
        <dbReference type="PROSITE-ProRule" id="PRU01020"/>
    </source>
</evidence>
<evidence type="ECO:0000269" key="2">
    <source>
    </source>
</evidence>
<evidence type="ECO:0000269" key="3">
    <source>
    </source>
</evidence>
<evidence type="ECO:0000303" key="4">
    <source>
    </source>
</evidence>
<evidence type="ECO:0000305" key="5"/>
<accession>A0A443HJY8</accession>
<sequence length="433" mass="48046">MAEEIKLTPLETFAQAISASAKTIATYCRDSGHPQLSDDNSSGLTGDVLPPSAPQAVTAARQTILEASYRLQQLVTEPSQYLPRLTVYPQHLAALRWLCHFRIPELIPVQGTRTYYELATEAKVPLHQLQSIARMAITGSFLREPEPNIVAHSRTSAHFVENPSLRDWTLFLAEDTAPMAMKLVEATEKWGDTRSKTETAFNLALGTDLAFFKYLSSNPQFTQKFSGYMKNVTASEGTSIKHLVNGFDWASLGNAIVVDVGGSTGHASIALAESFPDLKFIVQDLPMVTSTSKDNREKTPLPETVASRISFESHDFFKPQPVQNADVYLLRMILHDWSFKEAGEILANLVPSVKQGARILIMDTVLPRHGTVPVTEEALLRVRDMTMMETFNSHEREIDEWKDLIQGVHTGLRVQQVIQPAGSSMAIIEVVRG</sequence>
<name>VDTC1_BYSSP</name>
<organism>
    <name type="scientific">Byssochlamys spectabilis</name>
    <name type="common">Paecilomyces variotii</name>
    <dbReference type="NCBI Taxonomy" id="264951"/>
    <lineage>
        <taxon>Eukaryota</taxon>
        <taxon>Fungi</taxon>
        <taxon>Dikarya</taxon>
        <taxon>Ascomycota</taxon>
        <taxon>Pezizomycotina</taxon>
        <taxon>Eurotiomycetes</taxon>
        <taxon>Eurotiomycetidae</taxon>
        <taxon>Eurotiales</taxon>
        <taxon>Thermoascaceae</taxon>
        <taxon>Paecilomyces</taxon>
    </lineage>
</organism>
<protein>
    <recommendedName>
        <fullName evidence="4">O-methyltransferase VdtC</fullName>
        <ecNumber evidence="2">2.1.1.-</ecNumber>
    </recommendedName>
    <alternativeName>
        <fullName evidence="4">Viriditoxin biosynthesis cluster protein C</fullName>
    </alternativeName>
</protein>
<dbReference type="EC" id="2.1.1.-" evidence="2"/>
<dbReference type="EMBL" id="RCNU01000014">
    <property type="protein sequence ID" value="RWQ92168.1"/>
    <property type="molecule type" value="Genomic_DNA"/>
</dbReference>
<dbReference type="SMR" id="A0A443HJY8"/>
<dbReference type="STRING" id="264951.A0A443HJY8"/>
<dbReference type="VEuPathDB" id="FungiDB:C8Q69DRAFT_488617"/>
<dbReference type="Proteomes" id="UP000283841">
    <property type="component" value="Unassembled WGS sequence"/>
</dbReference>
<dbReference type="GO" id="GO:0008171">
    <property type="term" value="F:O-methyltransferase activity"/>
    <property type="evidence" value="ECO:0000314"/>
    <property type="project" value="UniProt"/>
</dbReference>
<dbReference type="GO" id="GO:0016218">
    <property type="term" value="F:polyketide synthase activity"/>
    <property type="evidence" value="ECO:0000314"/>
    <property type="project" value="UniProt"/>
</dbReference>
<dbReference type="GO" id="GO:0140783">
    <property type="term" value="P:(M)-viriditoxin biosynthetic process"/>
    <property type="evidence" value="ECO:0000314"/>
    <property type="project" value="GO_Central"/>
</dbReference>
<dbReference type="GO" id="GO:0032259">
    <property type="term" value="P:methylation"/>
    <property type="evidence" value="ECO:0007669"/>
    <property type="project" value="UniProtKB-KW"/>
</dbReference>
<dbReference type="Gene3D" id="3.40.50.150">
    <property type="entry name" value="Vaccinia Virus protein VP39"/>
    <property type="match status" value="1"/>
</dbReference>
<dbReference type="Gene3D" id="1.10.10.10">
    <property type="entry name" value="Winged helix-like DNA-binding domain superfamily/Winged helix DNA-binding domain"/>
    <property type="match status" value="1"/>
</dbReference>
<dbReference type="InterPro" id="IPR016461">
    <property type="entry name" value="COMT-like"/>
</dbReference>
<dbReference type="InterPro" id="IPR001077">
    <property type="entry name" value="O_MeTrfase_dom"/>
</dbReference>
<dbReference type="InterPro" id="IPR029063">
    <property type="entry name" value="SAM-dependent_MTases_sf"/>
</dbReference>
<dbReference type="InterPro" id="IPR036388">
    <property type="entry name" value="WH-like_DNA-bd_sf"/>
</dbReference>
<dbReference type="InterPro" id="IPR036390">
    <property type="entry name" value="WH_DNA-bd_sf"/>
</dbReference>
<dbReference type="PANTHER" id="PTHR43712:SF19">
    <property type="entry name" value="DUAL O-METHYLTRANSFERASE_FAD-DEPENDENT MONOOXYGENASE ELCB"/>
    <property type="match status" value="1"/>
</dbReference>
<dbReference type="PANTHER" id="PTHR43712">
    <property type="entry name" value="PUTATIVE (AFU_ORTHOLOGUE AFUA_4G14580)-RELATED"/>
    <property type="match status" value="1"/>
</dbReference>
<dbReference type="Pfam" id="PF00891">
    <property type="entry name" value="Methyltransf_2"/>
    <property type="match status" value="1"/>
</dbReference>
<dbReference type="SUPFAM" id="SSF53335">
    <property type="entry name" value="S-adenosyl-L-methionine-dependent methyltransferases"/>
    <property type="match status" value="1"/>
</dbReference>
<dbReference type="SUPFAM" id="SSF46785">
    <property type="entry name" value="Winged helix' DNA-binding domain"/>
    <property type="match status" value="1"/>
</dbReference>
<dbReference type="PROSITE" id="PS51683">
    <property type="entry name" value="SAM_OMT_II"/>
    <property type="match status" value="1"/>
</dbReference>